<dbReference type="EC" id="4.3.1.3" evidence="1"/>
<dbReference type="EMBL" id="AE003852">
    <property type="protein sequence ID" value="AAF94361.1"/>
    <property type="molecule type" value="Genomic_DNA"/>
</dbReference>
<dbReference type="PIR" id="E82228">
    <property type="entry name" value="E82228"/>
</dbReference>
<dbReference type="RefSeq" id="NP_230847.1">
    <property type="nucleotide sequence ID" value="NC_002505.1"/>
</dbReference>
<dbReference type="RefSeq" id="WP_000902906.1">
    <property type="nucleotide sequence ID" value="NZ_LT906614.1"/>
</dbReference>
<dbReference type="SMR" id="Q9KSQ4"/>
<dbReference type="STRING" id="243277.VC_1202"/>
<dbReference type="DNASU" id="2614635"/>
<dbReference type="EnsemblBacteria" id="AAF94361">
    <property type="protein sequence ID" value="AAF94361"/>
    <property type="gene ID" value="VC_1202"/>
</dbReference>
<dbReference type="KEGG" id="vch:VC_1202"/>
<dbReference type="PATRIC" id="fig|243277.26.peg.1149"/>
<dbReference type="eggNOG" id="COG2986">
    <property type="taxonomic scope" value="Bacteria"/>
</dbReference>
<dbReference type="HOGENOM" id="CLU_014801_4_0_6"/>
<dbReference type="UniPathway" id="UPA00379">
    <property type="reaction ID" value="UER00549"/>
</dbReference>
<dbReference type="Proteomes" id="UP000000584">
    <property type="component" value="Chromosome 1"/>
</dbReference>
<dbReference type="GO" id="GO:0005737">
    <property type="term" value="C:cytoplasm"/>
    <property type="evidence" value="ECO:0007669"/>
    <property type="project" value="UniProtKB-SubCell"/>
</dbReference>
<dbReference type="GO" id="GO:0004397">
    <property type="term" value="F:histidine ammonia-lyase activity"/>
    <property type="evidence" value="ECO:0000318"/>
    <property type="project" value="GO_Central"/>
</dbReference>
<dbReference type="GO" id="GO:0006548">
    <property type="term" value="P:L-histidine catabolic process"/>
    <property type="evidence" value="ECO:0000318"/>
    <property type="project" value="GO_Central"/>
</dbReference>
<dbReference type="GO" id="GO:0019556">
    <property type="term" value="P:L-histidine catabolic process to glutamate and formamide"/>
    <property type="evidence" value="ECO:0007669"/>
    <property type="project" value="UniProtKB-UniPathway"/>
</dbReference>
<dbReference type="GO" id="GO:0019557">
    <property type="term" value="P:L-histidine catabolic process to glutamate and formate"/>
    <property type="evidence" value="ECO:0007669"/>
    <property type="project" value="UniProtKB-UniPathway"/>
</dbReference>
<dbReference type="CDD" id="cd00332">
    <property type="entry name" value="PAL-HAL"/>
    <property type="match status" value="1"/>
</dbReference>
<dbReference type="FunFam" id="1.10.275.10:FF:000005">
    <property type="entry name" value="Histidine ammonia-lyase"/>
    <property type="match status" value="1"/>
</dbReference>
<dbReference type="FunFam" id="1.20.200.10:FF:000003">
    <property type="entry name" value="Histidine ammonia-lyase"/>
    <property type="match status" value="1"/>
</dbReference>
<dbReference type="Gene3D" id="1.20.200.10">
    <property type="entry name" value="Fumarase/aspartase (Central domain)"/>
    <property type="match status" value="1"/>
</dbReference>
<dbReference type="Gene3D" id="1.10.275.10">
    <property type="entry name" value="Fumarase/aspartase (N-terminal domain)"/>
    <property type="match status" value="1"/>
</dbReference>
<dbReference type="HAMAP" id="MF_00229">
    <property type="entry name" value="His_ammonia_lyase"/>
    <property type="match status" value="1"/>
</dbReference>
<dbReference type="InterPro" id="IPR001106">
    <property type="entry name" value="Aromatic_Lyase"/>
</dbReference>
<dbReference type="InterPro" id="IPR024083">
    <property type="entry name" value="Fumarase/histidase_N"/>
</dbReference>
<dbReference type="InterPro" id="IPR005921">
    <property type="entry name" value="HutH"/>
</dbReference>
<dbReference type="InterPro" id="IPR008948">
    <property type="entry name" value="L-Aspartase-like"/>
</dbReference>
<dbReference type="InterPro" id="IPR022313">
    <property type="entry name" value="Phe/His_NH3-lyase_AS"/>
</dbReference>
<dbReference type="NCBIfam" id="TIGR01225">
    <property type="entry name" value="hutH"/>
    <property type="match status" value="1"/>
</dbReference>
<dbReference type="NCBIfam" id="NF006871">
    <property type="entry name" value="PRK09367.1"/>
    <property type="match status" value="1"/>
</dbReference>
<dbReference type="PANTHER" id="PTHR10362">
    <property type="entry name" value="HISTIDINE AMMONIA-LYASE"/>
    <property type="match status" value="1"/>
</dbReference>
<dbReference type="Pfam" id="PF00221">
    <property type="entry name" value="Lyase_aromatic"/>
    <property type="match status" value="1"/>
</dbReference>
<dbReference type="SUPFAM" id="SSF48557">
    <property type="entry name" value="L-aspartase-like"/>
    <property type="match status" value="1"/>
</dbReference>
<dbReference type="PROSITE" id="PS00488">
    <property type="entry name" value="PAL_HISTIDASE"/>
    <property type="match status" value="1"/>
</dbReference>
<evidence type="ECO:0000255" key="1">
    <source>
        <dbReference type="HAMAP-Rule" id="MF_00229"/>
    </source>
</evidence>
<sequence length="511" mass="54817">MLHLMIKPGQLSLKQLRQVSRSPVVLSLDPEAIPAIAESAQVVEQVISEGRTVYGINTGFGLLANTKIAPQDLETLQKSIVLSHAAGIGELMSDETVRLMMLLKINSLARGYSGIRLEVIQALIELVNNQIYPCVPKKGSVGASGDLAPLAHMSTVLLGEGQARYNGKIISGLEAMKIAGLEPITLAPKEGLALLNGTQASTAFALEGLFVAEDLFASATVCGAMSVEAALGSRRPFDPRIHRVRGHRTQMDAATAYRHLLDVSSEIGQSHSNCEKVQDPYSLRCQPQVMGACLQQIRSAAEVLEVEANSVSDNPLVFAEDGDIISGGNFHAEPVAMAADNLALAIAEIGSLSERRMALLIDSALSKLPPFLVDNGGVNSGFMIAQVTAAALASENKTLAHPASVDSLPTSANQEDHVSMATFAARRLRDMGENTRGILAVEYLAAAQGLDFRAPLKSSPRIEEARQILREKVPFYDKDRYFAPDIEKANALLQLAVHNRLMPDQLLPSQH</sequence>
<gene>
    <name evidence="1" type="primary">hutH</name>
    <name type="ordered locus">VC_1202</name>
</gene>
<reference key="1">
    <citation type="journal article" date="2000" name="Nature">
        <title>DNA sequence of both chromosomes of the cholera pathogen Vibrio cholerae.</title>
        <authorList>
            <person name="Heidelberg J.F."/>
            <person name="Eisen J.A."/>
            <person name="Nelson W.C."/>
            <person name="Clayton R.A."/>
            <person name="Gwinn M.L."/>
            <person name="Dodson R.J."/>
            <person name="Haft D.H."/>
            <person name="Hickey E.K."/>
            <person name="Peterson J.D."/>
            <person name="Umayam L.A."/>
            <person name="Gill S.R."/>
            <person name="Nelson K.E."/>
            <person name="Read T.D."/>
            <person name="Tettelin H."/>
            <person name="Richardson D.L."/>
            <person name="Ermolaeva M.D."/>
            <person name="Vamathevan J.J."/>
            <person name="Bass S."/>
            <person name="Qin H."/>
            <person name="Dragoi I."/>
            <person name="Sellers P."/>
            <person name="McDonald L.A."/>
            <person name="Utterback T.R."/>
            <person name="Fleischmann R.D."/>
            <person name="Nierman W.C."/>
            <person name="White O."/>
            <person name="Salzberg S.L."/>
            <person name="Smith H.O."/>
            <person name="Colwell R.R."/>
            <person name="Mekalanos J.J."/>
            <person name="Venter J.C."/>
            <person name="Fraser C.M."/>
        </authorList>
    </citation>
    <scope>NUCLEOTIDE SEQUENCE [LARGE SCALE GENOMIC DNA]</scope>
    <source>
        <strain>ATCC 39315 / El Tor Inaba N16961</strain>
    </source>
</reference>
<protein>
    <recommendedName>
        <fullName evidence="1">Histidine ammonia-lyase</fullName>
        <shortName evidence="1">Histidase</shortName>
        <ecNumber evidence="1">4.3.1.3</ecNumber>
    </recommendedName>
</protein>
<organism>
    <name type="scientific">Vibrio cholerae serotype O1 (strain ATCC 39315 / El Tor Inaba N16961)</name>
    <dbReference type="NCBI Taxonomy" id="243277"/>
    <lineage>
        <taxon>Bacteria</taxon>
        <taxon>Pseudomonadati</taxon>
        <taxon>Pseudomonadota</taxon>
        <taxon>Gammaproteobacteria</taxon>
        <taxon>Vibrionales</taxon>
        <taxon>Vibrionaceae</taxon>
        <taxon>Vibrio</taxon>
    </lineage>
</organism>
<feature type="chain" id="PRO_0000161046" description="Histidine ammonia-lyase">
    <location>
        <begin position="1"/>
        <end position="511"/>
    </location>
</feature>
<feature type="modified residue" description="2,3-didehydroalanine (Ser)" evidence="1">
    <location>
        <position position="144"/>
    </location>
</feature>
<feature type="cross-link" description="5-imidazolinone (Ala-Gly)" evidence="1">
    <location>
        <begin position="143"/>
        <end position="145"/>
    </location>
</feature>
<proteinExistence type="inferred from homology"/>
<name>HUTH_VIBCH</name>
<comment type="catalytic activity">
    <reaction evidence="1">
        <text>L-histidine = trans-urocanate + NH4(+)</text>
        <dbReference type="Rhea" id="RHEA:21232"/>
        <dbReference type="ChEBI" id="CHEBI:17771"/>
        <dbReference type="ChEBI" id="CHEBI:28938"/>
        <dbReference type="ChEBI" id="CHEBI:57595"/>
        <dbReference type="EC" id="4.3.1.3"/>
    </reaction>
</comment>
<comment type="pathway">
    <text evidence="1">Amino-acid degradation; L-histidine degradation into L-glutamate; N-formimidoyl-L-glutamate from L-histidine: step 1/3.</text>
</comment>
<comment type="subcellular location">
    <subcellularLocation>
        <location evidence="1">Cytoplasm</location>
    </subcellularLocation>
</comment>
<comment type="PTM">
    <text evidence="1">Contains an active site 4-methylidene-imidazol-5-one (MIO), which is formed autocatalytically by cyclization and dehydration of residues Ala-Ser-Gly.</text>
</comment>
<comment type="similarity">
    <text evidence="1">Belongs to the PAL/histidase family.</text>
</comment>
<keyword id="KW-0963">Cytoplasm</keyword>
<keyword id="KW-0369">Histidine metabolism</keyword>
<keyword id="KW-0456">Lyase</keyword>
<keyword id="KW-1185">Reference proteome</keyword>
<accession>Q9KSQ4</accession>